<reference key="1">
    <citation type="submission" date="2008-08" db="EMBL/GenBank/DDBJ databases">
        <title>Complete sequence of Vibrio fischeri strain MJ11.</title>
        <authorList>
            <person name="Mandel M.J."/>
            <person name="Stabb E.V."/>
            <person name="Ruby E.G."/>
            <person name="Ferriera S."/>
            <person name="Johnson J."/>
            <person name="Kravitz S."/>
            <person name="Beeson K."/>
            <person name="Sutton G."/>
            <person name="Rogers Y.-H."/>
            <person name="Friedman R."/>
            <person name="Frazier M."/>
            <person name="Venter J.C."/>
        </authorList>
    </citation>
    <scope>NUCLEOTIDE SEQUENCE [LARGE SCALE GENOMIC DNA]</scope>
    <source>
        <strain>MJ11</strain>
    </source>
</reference>
<organism>
    <name type="scientific">Aliivibrio fischeri (strain MJ11)</name>
    <name type="common">Vibrio fischeri</name>
    <dbReference type="NCBI Taxonomy" id="388396"/>
    <lineage>
        <taxon>Bacteria</taxon>
        <taxon>Pseudomonadati</taxon>
        <taxon>Pseudomonadota</taxon>
        <taxon>Gammaproteobacteria</taxon>
        <taxon>Vibrionales</taxon>
        <taxon>Vibrionaceae</taxon>
        <taxon>Aliivibrio</taxon>
    </lineage>
</organism>
<comment type="function">
    <text evidence="1">Anchors the catalytic components of the fumarate reductase complex to the cell membrane, binds quinones.</text>
</comment>
<comment type="subunit">
    <text evidence="1">Part of an enzyme complex containing four subunits: a flavoprotein (FrdA), an iron-sulfur protein (FrdB), and two hydrophobic anchor proteins (FrdC and FrdD).</text>
</comment>
<comment type="subcellular location">
    <subcellularLocation>
        <location evidence="1">Cell inner membrane</location>
        <topology evidence="1">Multi-pass membrane protein</topology>
    </subcellularLocation>
</comment>
<comment type="similarity">
    <text evidence="1">Belongs to the FrdD family.</text>
</comment>
<sequence>MVNRNPKRSDEPVWWGLFGAGGTWFAMLTPVTILVLGILVPLGVIGPESMNYLRVAGFVTSIIGALFVIGSISMPMWHAMHRLHHGMHDLKFHTGTAGKIACYAAAALATVLSVVFIFMI</sequence>
<proteinExistence type="inferred from homology"/>
<feature type="chain" id="PRO_1000132419" description="Fumarate reductase subunit D">
    <location>
        <begin position="1"/>
        <end position="120"/>
    </location>
</feature>
<feature type="transmembrane region" description="Helical" evidence="1">
    <location>
        <begin position="25"/>
        <end position="45"/>
    </location>
</feature>
<feature type="transmembrane region" description="Helical" evidence="1">
    <location>
        <begin position="55"/>
        <end position="75"/>
    </location>
</feature>
<feature type="transmembrane region" description="Helical" evidence="1">
    <location>
        <begin position="100"/>
        <end position="120"/>
    </location>
</feature>
<keyword id="KW-0997">Cell inner membrane</keyword>
<keyword id="KW-1003">Cell membrane</keyword>
<keyword id="KW-0472">Membrane</keyword>
<keyword id="KW-0812">Transmembrane</keyword>
<keyword id="KW-1133">Transmembrane helix</keyword>
<dbReference type="EMBL" id="CP001139">
    <property type="protein sequence ID" value="ACH66930.1"/>
    <property type="molecule type" value="Genomic_DNA"/>
</dbReference>
<dbReference type="RefSeq" id="WP_005421184.1">
    <property type="nucleotide sequence ID" value="NC_011184.1"/>
</dbReference>
<dbReference type="SMR" id="B5FBS8"/>
<dbReference type="GeneID" id="54165060"/>
<dbReference type="KEGG" id="vfm:VFMJ11_2459"/>
<dbReference type="HOGENOM" id="CLU_168367_0_0_6"/>
<dbReference type="Proteomes" id="UP000001857">
    <property type="component" value="Chromosome I"/>
</dbReference>
<dbReference type="GO" id="GO:0045283">
    <property type="term" value="C:fumarate reductase complex"/>
    <property type="evidence" value="ECO:0007669"/>
    <property type="project" value="UniProtKB-UniRule"/>
</dbReference>
<dbReference type="GO" id="GO:0005886">
    <property type="term" value="C:plasma membrane"/>
    <property type="evidence" value="ECO:0007669"/>
    <property type="project" value="UniProtKB-SubCell"/>
</dbReference>
<dbReference type="GO" id="GO:0000104">
    <property type="term" value="F:succinate dehydrogenase activity"/>
    <property type="evidence" value="ECO:0007669"/>
    <property type="project" value="UniProtKB-UniRule"/>
</dbReference>
<dbReference type="GO" id="GO:0006106">
    <property type="term" value="P:fumarate metabolic process"/>
    <property type="evidence" value="ECO:0007669"/>
    <property type="project" value="InterPro"/>
</dbReference>
<dbReference type="CDD" id="cd00547">
    <property type="entry name" value="QFR_TypeD_subunitD"/>
    <property type="match status" value="1"/>
</dbReference>
<dbReference type="Gene3D" id="1.20.1300.10">
    <property type="entry name" value="Fumarate reductase/succinate dehydrogenase, transmembrane subunit"/>
    <property type="match status" value="1"/>
</dbReference>
<dbReference type="HAMAP" id="MF_00709">
    <property type="entry name" value="Fumarate_red_D"/>
    <property type="match status" value="1"/>
</dbReference>
<dbReference type="InterPro" id="IPR003418">
    <property type="entry name" value="Fumarate_red_D"/>
</dbReference>
<dbReference type="InterPro" id="IPR034804">
    <property type="entry name" value="SQR/QFR_C/D"/>
</dbReference>
<dbReference type="NCBIfam" id="NF003977">
    <property type="entry name" value="PRK05470.1-1"/>
    <property type="match status" value="1"/>
</dbReference>
<dbReference type="Pfam" id="PF02313">
    <property type="entry name" value="Fumarate_red_D"/>
    <property type="match status" value="1"/>
</dbReference>
<dbReference type="PIRSF" id="PIRSF000179">
    <property type="entry name" value="FrdD"/>
    <property type="match status" value="1"/>
</dbReference>
<dbReference type="SUPFAM" id="SSF81343">
    <property type="entry name" value="Fumarate reductase respiratory complex transmembrane subunits"/>
    <property type="match status" value="1"/>
</dbReference>
<gene>
    <name evidence="1" type="primary">frdD</name>
    <name type="ordered locus">VFMJ11_2459</name>
</gene>
<protein>
    <recommendedName>
        <fullName evidence="1">Fumarate reductase subunit D</fullName>
    </recommendedName>
    <alternativeName>
        <fullName evidence="1">Quinol-fumarate reductase subunit D</fullName>
        <shortName evidence="1">QFR subunit D</shortName>
    </alternativeName>
</protein>
<accession>B5FBS8</accession>
<name>FRDD_ALIFM</name>
<evidence type="ECO:0000255" key="1">
    <source>
        <dbReference type="HAMAP-Rule" id="MF_00709"/>
    </source>
</evidence>